<evidence type="ECO:0000255" key="1"/>
<gene>
    <name type="ordered locus">AF_1625</name>
</gene>
<accession>O28648</accession>
<keyword id="KW-1185">Reference proteome</keyword>
<keyword id="KW-0732">Signal</keyword>
<feature type="signal peptide" evidence="1">
    <location>
        <begin position="1"/>
        <end position="28"/>
    </location>
</feature>
<feature type="chain" id="PRO_0000013667" description="Uncharacterized protein AF_1625">
    <location>
        <begin position="29"/>
        <end position="581"/>
    </location>
</feature>
<proteinExistence type="inferred from homology"/>
<dbReference type="EMBL" id="AE000782">
    <property type="protein sequence ID" value="AAB89628.1"/>
    <property type="molecule type" value="Genomic_DNA"/>
</dbReference>
<dbReference type="PIR" id="H69452">
    <property type="entry name" value="H69452"/>
</dbReference>
<dbReference type="RefSeq" id="WP_010879122.1">
    <property type="nucleotide sequence ID" value="NC_000917.1"/>
</dbReference>
<dbReference type="SMR" id="O28648"/>
<dbReference type="STRING" id="224325.AF_1625"/>
<dbReference type="PaxDb" id="224325-AF_1625"/>
<dbReference type="EnsemblBacteria" id="AAB89628">
    <property type="protein sequence ID" value="AAB89628"/>
    <property type="gene ID" value="AF_1625"/>
</dbReference>
<dbReference type="GeneID" id="1484850"/>
<dbReference type="KEGG" id="afu:AF_1625"/>
<dbReference type="eggNOG" id="arCOG02916">
    <property type="taxonomic scope" value="Archaea"/>
</dbReference>
<dbReference type="HOGENOM" id="CLU_468990_0_0_2"/>
<dbReference type="OrthoDB" id="121941at2157"/>
<dbReference type="Proteomes" id="UP000002199">
    <property type="component" value="Chromosome"/>
</dbReference>
<dbReference type="Gene3D" id="2.60.40.10">
    <property type="entry name" value="Immunoglobulins"/>
    <property type="match status" value="1"/>
</dbReference>
<dbReference type="InterPro" id="IPR013783">
    <property type="entry name" value="Ig-like_fold"/>
</dbReference>
<dbReference type="InterPro" id="IPR008964">
    <property type="entry name" value="Invasin/intimin_cell_adhesion"/>
</dbReference>
<dbReference type="SUPFAM" id="SSF49373">
    <property type="entry name" value="Invasin/intimin cell-adhesion fragments"/>
    <property type="match status" value="1"/>
</dbReference>
<name>Y1625_ARCFU</name>
<sequence>MDSKAVSPLIGFVLMLAIIMGLIGIMQAQWVPVWNKEVEAEHLSKLEFEASEIPKIMFISATTGKQGVASIDAGCEYPNRGFLINPSTASTSLKAIPLSVDVKFNETLPNGSLFRYSNKFTTYAIIVQPNYFYMQKPEIIVEHSAVIKTSGNSALNVSSPVSFSRNKVHLFIVNSTFSSISTPNTLNLQFIPVSYGGDTFVKNASITLKVLDETFDWWNKTLKNIFGAGNVTADGSRKEMTFRLFNTTLSMSYLIVQASIGERAKLNERIEPYRIFATSSNTLSMLKGEQRELNVKVLDIYNNPVRGYSRVSYSVVSGGDKCRIVSASPQTDEKGVFTVTVEAVNSGNCDVEFRIDSINSGFNKTKFSITVIPVSSGGLGGQGYLSFTPASRGLVEIYHGPVNGFIDPTKPPAESPRDLITDPNWEPYALEDKELAAYNDGSWDWWSGEYVPTSGYLEKTQNNAQSKQNSQKNHASQLFEFNVGDVQMSSLKVFWNGIAWLDVQNNRNDGVVLYVWNGTGWEYLCDTTSSSEVWLQCEKRGNYIQNKKVYLLIVQNDWTQTWKGNRDSQIYTDYIELDILT</sequence>
<organism>
    <name type="scientific">Archaeoglobus fulgidus (strain ATCC 49558 / DSM 4304 / JCM 9628 / NBRC 100126 / VC-16)</name>
    <dbReference type="NCBI Taxonomy" id="224325"/>
    <lineage>
        <taxon>Archaea</taxon>
        <taxon>Methanobacteriati</taxon>
        <taxon>Methanobacteriota</taxon>
        <taxon>Archaeoglobi</taxon>
        <taxon>Archaeoglobales</taxon>
        <taxon>Archaeoglobaceae</taxon>
        <taxon>Archaeoglobus</taxon>
    </lineage>
</organism>
<reference key="1">
    <citation type="journal article" date="1997" name="Nature">
        <title>The complete genome sequence of the hyperthermophilic, sulphate-reducing archaeon Archaeoglobus fulgidus.</title>
        <authorList>
            <person name="Klenk H.-P."/>
            <person name="Clayton R.A."/>
            <person name="Tomb J.-F."/>
            <person name="White O."/>
            <person name="Nelson K.E."/>
            <person name="Ketchum K.A."/>
            <person name="Dodson R.J."/>
            <person name="Gwinn M.L."/>
            <person name="Hickey E.K."/>
            <person name="Peterson J.D."/>
            <person name="Richardson D.L."/>
            <person name="Kerlavage A.R."/>
            <person name="Graham D.E."/>
            <person name="Kyrpides N.C."/>
            <person name="Fleischmann R.D."/>
            <person name="Quackenbush J."/>
            <person name="Lee N.H."/>
            <person name="Sutton G.G."/>
            <person name="Gill S.R."/>
            <person name="Kirkness E.F."/>
            <person name="Dougherty B.A."/>
            <person name="McKenney K."/>
            <person name="Adams M.D."/>
            <person name="Loftus B.J."/>
            <person name="Peterson S.N."/>
            <person name="Reich C.I."/>
            <person name="McNeil L.K."/>
            <person name="Badger J.H."/>
            <person name="Glodek A."/>
            <person name="Zhou L."/>
            <person name="Overbeek R."/>
            <person name="Gocayne J.D."/>
            <person name="Weidman J.F."/>
            <person name="McDonald L.A."/>
            <person name="Utterback T.R."/>
            <person name="Cotton M.D."/>
            <person name="Spriggs T."/>
            <person name="Artiach P."/>
            <person name="Kaine B.P."/>
            <person name="Sykes S.M."/>
            <person name="Sadow P.W."/>
            <person name="D'Andrea K.P."/>
            <person name="Bowman C."/>
            <person name="Fujii C."/>
            <person name="Garland S.A."/>
            <person name="Mason T.M."/>
            <person name="Olsen G.J."/>
            <person name="Fraser C.M."/>
            <person name="Smith H.O."/>
            <person name="Woese C.R."/>
            <person name="Venter J.C."/>
        </authorList>
    </citation>
    <scope>NUCLEOTIDE SEQUENCE [LARGE SCALE GENOMIC DNA]</scope>
    <source>
        <strain>ATCC 49558 / DSM 4304 / JCM 9628 / NBRC 100126 / VC-16</strain>
    </source>
</reference>
<protein>
    <recommendedName>
        <fullName>Uncharacterized protein AF_1625</fullName>
    </recommendedName>
</protein>